<proteinExistence type="evidence at protein level"/>
<reference key="1">
    <citation type="journal article" date="1994" name="EMBO J.">
        <title>Complete DNA sequence of yeast chromosome II.</title>
        <authorList>
            <person name="Feldmann H."/>
            <person name="Aigle M."/>
            <person name="Aljinovic G."/>
            <person name="Andre B."/>
            <person name="Baclet M.C."/>
            <person name="Barthe C."/>
            <person name="Baur A."/>
            <person name="Becam A.-M."/>
            <person name="Biteau N."/>
            <person name="Boles E."/>
            <person name="Brandt T."/>
            <person name="Brendel M."/>
            <person name="Brueckner M."/>
            <person name="Bussereau F."/>
            <person name="Christiansen C."/>
            <person name="Contreras R."/>
            <person name="Crouzet M."/>
            <person name="Cziepluch C."/>
            <person name="Demolis N."/>
            <person name="Delaveau T."/>
            <person name="Doignon F."/>
            <person name="Domdey H."/>
            <person name="Duesterhus S."/>
            <person name="Dubois E."/>
            <person name="Dujon B."/>
            <person name="El Bakkoury M."/>
            <person name="Entian K.-D."/>
            <person name="Feuermann M."/>
            <person name="Fiers W."/>
            <person name="Fobo G.M."/>
            <person name="Fritz C."/>
            <person name="Gassenhuber J."/>
            <person name="Glansdorff N."/>
            <person name="Goffeau A."/>
            <person name="Grivell L.A."/>
            <person name="de Haan M."/>
            <person name="Hein C."/>
            <person name="Herbert C.J."/>
            <person name="Hollenberg C.P."/>
            <person name="Holmstroem K."/>
            <person name="Jacq C."/>
            <person name="Jacquet M."/>
            <person name="Jauniaux J.-C."/>
            <person name="Jonniaux J.-L."/>
            <person name="Kallesoee T."/>
            <person name="Kiesau P."/>
            <person name="Kirchrath L."/>
            <person name="Koetter P."/>
            <person name="Korol S."/>
            <person name="Liebl S."/>
            <person name="Logghe M."/>
            <person name="Lohan A.J.E."/>
            <person name="Louis E.J."/>
            <person name="Li Z.Y."/>
            <person name="Maat M.J."/>
            <person name="Mallet L."/>
            <person name="Mannhaupt G."/>
            <person name="Messenguy F."/>
            <person name="Miosga T."/>
            <person name="Molemans F."/>
            <person name="Mueller S."/>
            <person name="Nasr F."/>
            <person name="Obermaier B."/>
            <person name="Perea J."/>
            <person name="Pierard A."/>
            <person name="Piravandi E."/>
            <person name="Pohl F.M."/>
            <person name="Pohl T.M."/>
            <person name="Potier S."/>
            <person name="Proft M."/>
            <person name="Purnelle B."/>
            <person name="Ramezani Rad M."/>
            <person name="Rieger M."/>
            <person name="Rose M."/>
            <person name="Schaaff-Gerstenschlaeger I."/>
            <person name="Scherens B."/>
            <person name="Schwarzlose C."/>
            <person name="Skala J."/>
            <person name="Slonimski P.P."/>
            <person name="Smits P.H.M."/>
            <person name="Souciet J.-L."/>
            <person name="Steensma H.Y."/>
            <person name="Stucka R."/>
            <person name="Urrestarazu L.A."/>
            <person name="van der Aart Q.J.M."/>
            <person name="Van Dyck L."/>
            <person name="Vassarotti A."/>
            <person name="Vetter I."/>
            <person name="Vierendeels F."/>
            <person name="Vissers S."/>
            <person name="Wagner G."/>
            <person name="de Wergifosse P."/>
            <person name="Wolfe K.H."/>
            <person name="Zagulski M."/>
            <person name="Zimmermann F.K."/>
            <person name="Mewes H.-W."/>
            <person name="Kleine K."/>
        </authorList>
    </citation>
    <scope>NUCLEOTIDE SEQUENCE [LARGE SCALE GENOMIC DNA]</scope>
    <source>
        <strain>ATCC 204508 / S288c</strain>
    </source>
</reference>
<reference key="2">
    <citation type="journal article" date="2014" name="G3 (Bethesda)">
        <title>The reference genome sequence of Saccharomyces cerevisiae: Then and now.</title>
        <authorList>
            <person name="Engel S.R."/>
            <person name="Dietrich F.S."/>
            <person name="Fisk D.G."/>
            <person name="Binkley G."/>
            <person name="Balakrishnan R."/>
            <person name="Costanzo M.C."/>
            <person name="Dwight S.S."/>
            <person name="Hitz B.C."/>
            <person name="Karra K."/>
            <person name="Nash R.S."/>
            <person name="Weng S."/>
            <person name="Wong E.D."/>
            <person name="Lloyd P."/>
            <person name="Skrzypek M.S."/>
            <person name="Miyasato S.R."/>
            <person name="Simison M."/>
            <person name="Cherry J.M."/>
        </authorList>
    </citation>
    <scope>GENOME REANNOTATION</scope>
    <source>
        <strain>ATCC 204508 / S288c</strain>
    </source>
</reference>
<reference key="3">
    <citation type="journal article" date="2001" name="J. Biol. Chem.">
        <title>Saccharomyces cerevisiae is capable of de novo pantothenic acid biosynthesis involving a novel pathway of beta-alanine production from spermine.</title>
        <authorList>
            <person name="White W.H."/>
            <person name="Gunyuzlu P.L."/>
            <person name="Toyn J.H."/>
        </authorList>
    </citation>
    <scope>FUNCTION</scope>
    <scope>DISRUPTION PHENOTYPE</scope>
</reference>
<reference key="4">
    <citation type="journal article" date="2003" name="Nature">
        <title>Global analysis of protein expression in yeast.</title>
        <authorList>
            <person name="Ghaemmaghami S."/>
            <person name="Huh W.-K."/>
            <person name="Bower K."/>
            <person name="Howson R.W."/>
            <person name="Belle A."/>
            <person name="Dephoure N."/>
            <person name="O'Shea E.K."/>
            <person name="Weissman J.S."/>
        </authorList>
    </citation>
    <scope>LEVEL OF PROTEIN EXPRESSION [LARGE SCALE ANALYSIS]</scope>
</reference>
<protein>
    <recommendedName>
        <fullName evidence="3">3-methyl-2-oxobutanoate hydroxymethyltransferase</fullName>
        <ecNumber evidence="5">2.1.2.11</ecNumber>
    </recommendedName>
    <alternativeName>
        <fullName evidence="3">Extracellular matrix protein 31</fullName>
    </alternativeName>
    <alternativeName>
        <fullName evidence="3">Ketopantoate hydroxymethyltransferase</fullName>
    </alternativeName>
</protein>
<gene>
    <name evidence="3" type="primary">ECM31</name>
    <name type="ordered locus">YBR176W</name>
    <name type="ORF">YBR1238</name>
</gene>
<accession>P38122</accession>
<accession>D6VQH1</accession>
<sequence length="312" mass="34465">MNIMKRQLCTSSKRFFSTAKNVVKYNTIQDIRNKYFTGTPLSMCTAYDFITATWVNKANCDLLLVGDSLAMTSLGYDSTITLSLNEFKYHVASVCRAEGSSMVVVDMPFGTFESGISDGLKNAIDIMKLDSKVTSVKVEVGSYTKDKYAMKFIEELCSRGIPVMAHIGLTPQKVHSLGGYKVQGSKSLLQMQELYETAMQLQKIGCWSILIECVPHKMAQFITSKLSVPTIGIGAGNGTSGQVLVISDLLGMQGDSVPKFVKQAVNMTDIATQGLKEYIASVEDRTFPERGTHTFKVKEDLWNEFLSSINEK</sequence>
<dbReference type="EC" id="2.1.2.11" evidence="5"/>
<dbReference type="EMBL" id="Z36045">
    <property type="protein sequence ID" value="CAA85137.1"/>
    <property type="molecule type" value="Genomic_DNA"/>
</dbReference>
<dbReference type="EMBL" id="BK006936">
    <property type="protein sequence ID" value="DAA07291.1"/>
    <property type="molecule type" value="Genomic_DNA"/>
</dbReference>
<dbReference type="PIR" id="S46047">
    <property type="entry name" value="S46047"/>
</dbReference>
<dbReference type="RefSeq" id="NP_009735.3">
    <property type="nucleotide sequence ID" value="NM_001178524.3"/>
</dbReference>
<dbReference type="SMR" id="P38122"/>
<dbReference type="BioGRID" id="32875">
    <property type="interactions" value="50"/>
</dbReference>
<dbReference type="DIP" id="DIP-1303N"/>
<dbReference type="FunCoup" id="P38122">
    <property type="interactions" value="210"/>
</dbReference>
<dbReference type="IntAct" id="P38122">
    <property type="interactions" value="4"/>
</dbReference>
<dbReference type="MINT" id="P38122"/>
<dbReference type="STRING" id="4932.YBR176W"/>
<dbReference type="PaxDb" id="4932-YBR176W"/>
<dbReference type="PeptideAtlas" id="P38122"/>
<dbReference type="EnsemblFungi" id="YBR176W_mRNA">
    <property type="protein sequence ID" value="YBR176W"/>
    <property type="gene ID" value="YBR176W"/>
</dbReference>
<dbReference type="GeneID" id="852474"/>
<dbReference type="KEGG" id="sce:YBR176W"/>
<dbReference type="AGR" id="SGD:S000000380"/>
<dbReference type="SGD" id="S000000380">
    <property type="gene designation" value="ECM31"/>
</dbReference>
<dbReference type="VEuPathDB" id="FungiDB:YBR176W"/>
<dbReference type="eggNOG" id="KOG2949">
    <property type="taxonomic scope" value="Eukaryota"/>
</dbReference>
<dbReference type="HOGENOM" id="CLU_036645_0_1_1"/>
<dbReference type="InParanoid" id="P38122"/>
<dbReference type="OMA" id="VLVWTDM"/>
<dbReference type="OrthoDB" id="425211at2759"/>
<dbReference type="BioCyc" id="MetaCyc:MONOMER3O-90"/>
<dbReference type="BioCyc" id="YEAST:MONOMER3O-90"/>
<dbReference type="UniPathway" id="UPA00028">
    <property type="reaction ID" value="UER00003"/>
</dbReference>
<dbReference type="BioGRID-ORCS" id="852474">
    <property type="hits" value="4 hits in 10 CRISPR screens"/>
</dbReference>
<dbReference type="PRO" id="PR:P38122"/>
<dbReference type="Proteomes" id="UP000002311">
    <property type="component" value="Chromosome II"/>
</dbReference>
<dbReference type="RNAct" id="P38122">
    <property type="molecule type" value="protein"/>
</dbReference>
<dbReference type="GO" id="GO:0005739">
    <property type="term" value="C:mitochondrion"/>
    <property type="evidence" value="ECO:0000314"/>
    <property type="project" value="SGD"/>
</dbReference>
<dbReference type="GO" id="GO:0003864">
    <property type="term" value="F:3-methyl-2-oxobutanoate hydroxymethyltransferase activity"/>
    <property type="evidence" value="ECO:0000315"/>
    <property type="project" value="SGD"/>
</dbReference>
<dbReference type="GO" id="GO:0000287">
    <property type="term" value="F:magnesium ion binding"/>
    <property type="evidence" value="ECO:0000318"/>
    <property type="project" value="GO_Central"/>
</dbReference>
<dbReference type="GO" id="GO:0015940">
    <property type="term" value="P:pantothenate biosynthetic process"/>
    <property type="evidence" value="ECO:0000315"/>
    <property type="project" value="SGD"/>
</dbReference>
<dbReference type="CDD" id="cd06557">
    <property type="entry name" value="KPHMT-like"/>
    <property type="match status" value="1"/>
</dbReference>
<dbReference type="FunFam" id="3.20.20.60:FF:000003">
    <property type="entry name" value="3-methyl-2-oxobutanoate hydroxymethyltransferase"/>
    <property type="match status" value="1"/>
</dbReference>
<dbReference type="Gene3D" id="3.20.20.60">
    <property type="entry name" value="Phosphoenolpyruvate-binding domains"/>
    <property type="match status" value="1"/>
</dbReference>
<dbReference type="HAMAP" id="MF_00156">
    <property type="entry name" value="PanB"/>
    <property type="match status" value="1"/>
</dbReference>
<dbReference type="InterPro" id="IPR003700">
    <property type="entry name" value="Pantoate_hydroxy_MeTrfase"/>
</dbReference>
<dbReference type="InterPro" id="IPR015813">
    <property type="entry name" value="Pyrv/PenolPyrv_kinase-like_dom"/>
</dbReference>
<dbReference type="InterPro" id="IPR040442">
    <property type="entry name" value="Pyrv_kinase-like_dom_sf"/>
</dbReference>
<dbReference type="NCBIfam" id="TIGR00222">
    <property type="entry name" value="panB"/>
    <property type="match status" value="1"/>
</dbReference>
<dbReference type="NCBIfam" id="NF001452">
    <property type="entry name" value="PRK00311.1"/>
    <property type="match status" value="1"/>
</dbReference>
<dbReference type="PANTHER" id="PTHR20881">
    <property type="entry name" value="3-METHYL-2-OXOBUTANOATE HYDROXYMETHYLTRANSFERASE"/>
    <property type="match status" value="1"/>
</dbReference>
<dbReference type="PANTHER" id="PTHR20881:SF0">
    <property type="entry name" value="3-METHYL-2-OXOBUTANOATE HYDROXYMETHYLTRANSFERASE"/>
    <property type="match status" value="1"/>
</dbReference>
<dbReference type="Pfam" id="PF02548">
    <property type="entry name" value="Pantoate_transf"/>
    <property type="match status" value="1"/>
</dbReference>
<dbReference type="PIRSF" id="PIRSF000388">
    <property type="entry name" value="Pantoate_hydroxy_MeTrfase"/>
    <property type="match status" value="1"/>
</dbReference>
<dbReference type="SUPFAM" id="SSF51621">
    <property type="entry name" value="Phosphoenolpyruvate/pyruvate domain"/>
    <property type="match status" value="1"/>
</dbReference>
<organism>
    <name type="scientific">Saccharomyces cerevisiae (strain ATCC 204508 / S288c)</name>
    <name type="common">Baker's yeast</name>
    <dbReference type="NCBI Taxonomy" id="559292"/>
    <lineage>
        <taxon>Eukaryota</taxon>
        <taxon>Fungi</taxon>
        <taxon>Dikarya</taxon>
        <taxon>Ascomycota</taxon>
        <taxon>Saccharomycotina</taxon>
        <taxon>Saccharomycetes</taxon>
        <taxon>Saccharomycetales</taxon>
        <taxon>Saccharomycetaceae</taxon>
        <taxon>Saccharomyces</taxon>
    </lineage>
</organism>
<comment type="function">
    <text evidence="1">Probable 3-methyl-2-oxobutanoate hydroxymethyltransferase required for pantothenic acid biosynthesis (PubMed:11154694). Acts downstream in the pantothenic acid pathway (PubMed:11154694).</text>
</comment>
<comment type="catalytic activity">
    <reaction evidence="5">
        <text>3-methyl-2-oxobutanoate + (6R)-5,10-methylene-5,6,7,8-tetrahydrofolate + H2O = 2-dehydropantoate + (6S)-5,6,7,8-tetrahydrofolate</text>
        <dbReference type="Rhea" id="RHEA:11824"/>
        <dbReference type="ChEBI" id="CHEBI:11561"/>
        <dbReference type="ChEBI" id="CHEBI:11851"/>
        <dbReference type="ChEBI" id="CHEBI:15377"/>
        <dbReference type="ChEBI" id="CHEBI:15636"/>
        <dbReference type="ChEBI" id="CHEBI:57453"/>
        <dbReference type="EC" id="2.1.2.11"/>
    </reaction>
</comment>
<comment type="pathway">
    <text evidence="5">Cofactor biosynthesis; (R)-pantothenate biosynthesis; (R)-pantoate from 3-methyl-2-oxobutanoate: step 1/2.</text>
</comment>
<comment type="disruption phenotype">
    <text evidence="1">Impairs growth on beta-alanine but can still utilize pantothenic acid.</text>
</comment>
<comment type="miscellaneous">
    <text evidence="2">Present with 1420 molecules/cell in log phase SD medium.</text>
</comment>
<comment type="similarity">
    <text evidence="4">Belongs to the PanB family.</text>
</comment>
<keyword id="KW-0566">Pantothenate biosynthesis</keyword>
<keyword id="KW-1185">Reference proteome</keyword>
<keyword id="KW-0808">Transferase</keyword>
<evidence type="ECO:0000269" key="1">
    <source>
    </source>
</evidence>
<evidence type="ECO:0000269" key="2">
    <source>
    </source>
</evidence>
<evidence type="ECO:0000303" key="3">
    <source>
    </source>
</evidence>
<evidence type="ECO:0000305" key="4"/>
<evidence type="ECO:0000305" key="5">
    <source>
    </source>
</evidence>
<feature type="chain" id="PRO_0000184927" description="3-methyl-2-oxobutanoate hydroxymethyltransferase">
    <location>
        <begin position="1"/>
        <end position="312"/>
    </location>
</feature>
<name>PANB_YEAST</name>